<keyword id="KW-0143">Chaperone</keyword>
<keyword id="KW-0963">Cytoplasm</keyword>
<keyword id="KW-0996">Nickel insertion</keyword>
<organism>
    <name type="scientific">Cupriavidus pinatubonensis (strain JMP 134 / LMG 1197)</name>
    <name type="common">Cupriavidus necator (strain JMP 134)</name>
    <dbReference type="NCBI Taxonomy" id="264198"/>
    <lineage>
        <taxon>Bacteria</taxon>
        <taxon>Pseudomonadati</taxon>
        <taxon>Pseudomonadota</taxon>
        <taxon>Betaproteobacteria</taxon>
        <taxon>Burkholderiales</taxon>
        <taxon>Burkholderiaceae</taxon>
        <taxon>Cupriavidus</taxon>
    </lineage>
</organism>
<reference key="1">
    <citation type="journal article" date="2010" name="PLoS ONE">
        <title>The complete multipartite genome sequence of Cupriavidus necator JMP134, a versatile pollutant degrader.</title>
        <authorList>
            <person name="Lykidis A."/>
            <person name="Perez-Pantoja D."/>
            <person name="Ledger T."/>
            <person name="Mavromatis K."/>
            <person name="Anderson I.J."/>
            <person name="Ivanova N.N."/>
            <person name="Hooper S.D."/>
            <person name="Lapidus A."/>
            <person name="Lucas S."/>
            <person name="Gonzalez B."/>
            <person name="Kyrpides N.C."/>
        </authorList>
    </citation>
    <scope>NUCLEOTIDE SEQUENCE [LARGE SCALE GENOMIC DNA]</scope>
    <source>
        <strain>JMP134 / LMG 1197</strain>
    </source>
</reference>
<comment type="function">
    <text evidence="1">Required for maturation of urease via the functional incorporation of the urease nickel metallocenter.</text>
</comment>
<comment type="subunit">
    <text evidence="1">UreD, UreF and UreG form a complex that acts as a GTP-hydrolysis-dependent molecular chaperone, activating the urease apoprotein by helping to assemble the nickel containing metallocenter of UreC. The UreE protein probably delivers the nickel.</text>
</comment>
<comment type="subcellular location">
    <subcellularLocation>
        <location evidence="1">Cytoplasm</location>
    </subcellularLocation>
</comment>
<comment type="similarity">
    <text evidence="1">Belongs to the UreD family.</text>
</comment>
<name>URED_CUPPJ</name>
<proteinExistence type="inferred from homology"/>
<evidence type="ECO:0000255" key="1">
    <source>
        <dbReference type="HAMAP-Rule" id="MF_01384"/>
    </source>
</evidence>
<protein>
    <recommendedName>
        <fullName evidence="1">Urease accessory protein UreD</fullName>
    </recommendedName>
</protein>
<dbReference type="EMBL" id="CP000090">
    <property type="protein sequence ID" value="AAZ60370.1"/>
    <property type="molecule type" value="Genomic_DNA"/>
</dbReference>
<dbReference type="SMR" id="Q473R3"/>
<dbReference type="STRING" id="264198.Reut_A0991"/>
<dbReference type="KEGG" id="reu:Reut_A0991"/>
<dbReference type="eggNOG" id="COG0829">
    <property type="taxonomic scope" value="Bacteria"/>
</dbReference>
<dbReference type="HOGENOM" id="CLU_056339_0_0_4"/>
<dbReference type="OrthoDB" id="9798842at2"/>
<dbReference type="GO" id="GO:0005737">
    <property type="term" value="C:cytoplasm"/>
    <property type="evidence" value="ECO:0007669"/>
    <property type="project" value="UniProtKB-SubCell"/>
</dbReference>
<dbReference type="GO" id="GO:0016151">
    <property type="term" value="F:nickel cation binding"/>
    <property type="evidence" value="ECO:0007669"/>
    <property type="project" value="UniProtKB-UniRule"/>
</dbReference>
<dbReference type="HAMAP" id="MF_01384">
    <property type="entry name" value="UreD"/>
    <property type="match status" value="1"/>
</dbReference>
<dbReference type="InterPro" id="IPR002669">
    <property type="entry name" value="UreD"/>
</dbReference>
<dbReference type="PANTHER" id="PTHR33643">
    <property type="entry name" value="UREASE ACCESSORY PROTEIN D"/>
    <property type="match status" value="1"/>
</dbReference>
<dbReference type="PANTHER" id="PTHR33643:SF1">
    <property type="entry name" value="UREASE ACCESSORY PROTEIN D"/>
    <property type="match status" value="1"/>
</dbReference>
<dbReference type="Pfam" id="PF01774">
    <property type="entry name" value="UreD"/>
    <property type="match status" value="1"/>
</dbReference>
<sequence>MRHPDFPSAVAVPPAWQASLRLRFAARGERTVLAARQHRGPLMVQKPLYPEGDICHAVILHPPAGVAGGDTLDIALHAEAGTHAVIATPGATKWYKSLGRDASQHVRLTVEEGARLDWLPQENIVFDDARARIATELSIAPGGSAIGWDAVVLGRQASGEQWNRGVLWLDTQVRCNGHALWIEQSQLDAGSPLRGAVAGLDGMSVLGTLWAVGHGATQELAESLAERLPYAAGLRAGVTCLSSPAQSMLLVRVLGRQMEAVRHVMVDAWSALREPIHGVPARPLRLWAT</sequence>
<gene>
    <name evidence="1" type="primary">ureD</name>
    <name type="ordered locus">Reut_A0991</name>
</gene>
<feature type="chain" id="PRO_0000340498" description="Urease accessory protein UreD">
    <location>
        <begin position="1"/>
        <end position="289"/>
    </location>
</feature>
<accession>Q473R3</accession>